<accession>Q5V1P6</accession>
<reference key="1">
    <citation type="journal article" date="2004" name="Genome Res.">
        <title>Genome sequence of Haloarcula marismortui: a halophilic archaeon from the Dead Sea.</title>
        <authorList>
            <person name="Baliga N.S."/>
            <person name="Bonneau R."/>
            <person name="Facciotti M.T."/>
            <person name="Pan M."/>
            <person name="Glusman G."/>
            <person name="Deutsch E.W."/>
            <person name="Shannon P."/>
            <person name="Chiu Y."/>
            <person name="Weng R.S."/>
            <person name="Gan R.R."/>
            <person name="Hung P."/>
            <person name="Date S.V."/>
            <person name="Marcotte E."/>
            <person name="Hood L."/>
            <person name="Ng W.V."/>
        </authorList>
    </citation>
    <scope>NUCLEOTIDE SEQUENCE [LARGE SCALE GENOMIC DNA]</scope>
    <source>
        <strain>ATCC 43049 / DSM 3752 / JCM 8966 / VKM B-1809</strain>
    </source>
</reference>
<name>GATB_HALMA</name>
<proteinExistence type="inferred from homology"/>
<dbReference type="EC" id="6.3.5.-" evidence="1"/>
<dbReference type="EMBL" id="AY596297">
    <property type="protein sequence ID" value="AAV46556.1"/>
    <property type="molecule type" value="Genomic_DNA"/>
</dbReference>
<dbReference type="RefSeq" id="WP_011223759.1">
    <property type="nucleotide sequence ID" value="NC_006396.1"/>
</dbReference>
<dbReference type="SMR" id="Q5V1P6"/>
<dbReference type="STRING" id="272569.rrnAC1642"/>
<dbReference type="PaxDb" id="272569-rrnAC1642"/>
<dbReference type="EnsemblBacteria" id="AAV46556">
    <property type="protein sequence ID" value="AAV46556"/>
    <property type="gene ID" value="rrnAC1642"/>
</dbReference>
<dbReference type="GeneID" id="40152608"/>
<dbReference type="KEGG" id="hma:rrnAC1642"/>
<dbReference type="PATRIC" id="fig|272569.17.peg.2330"/>
<dbReference type="eggNOG" id="arCOG01718">
    <property type="taxonomic scope" value="Archaea"/>
</dbReference>
<dbReference type="HOGENOM" id="CLU_019240_0_0_2"/>
<dbReference type="Proteomes" id="UP000001169">
    <property type="component" value="Chromosome I"/>
</dbReference>
<dbReference type="GO" id="GO:0050566">
    <property type="term" value="F:asparaginyl-tRNA synthase (glutamine-hydrolyzing) activity"/>
    <property type="evidence" value="ECO:0007669"/>
    <property type="project" value="RHEA"/>
</dbReference>
<dbReference type="GO" id="GO:0005524">
    <property type="term" value="F:ATP binding"/>
    <property type="evidence" value="ECO:0007669"/>
    <property type="project" value="UniProtKB-KW"/>
</dbReference>
<dbReference type="GO" id="GO:0050567">
    <property type="term" value="F:glutaminyl-tRNA synthase (glutamine-hydrolyzing) activity"/>
    <property type="evidence" value="ECO:0007669"/>
    <property type="project" value="UniProtKB-UniRule"/>
</dbReference>
<dbReference type="GO" id="GO:0070681">
    <property type="term" value="P:glutaminyl-tRNAGln biosynthesis via transamidation"/>
    <property type="evidence" value="ECO:0007669"/>
    <property type="project" value="TreeGrafter"/>
</dbReference>
<dbReference type="GO" id="GO:0006412">
    <property type="term" value="P:translation"/>
    <property type="evidence" value="ECO:0007669"/>
    <property type="project" value="UniProtKB-UniRule"/>
</dbReference>
<dbReference type="FunFam" id="1.10.10.410:FF:000001">
    <property type="entry name" value="Aspartyl/glutamyl-tRNA(Asn/Gln) amidotransferase subunit B"/>
    <property type="match status" value="1"/>
</dbReference>
<dbReference type="FunFam" id="1.10.150.380:FF:000001">
    <property type="entry name" value="Aspartyl/glutamyl-tRNA(Asn/Gln) amidotransferase subunit B"/>
    <property type="match status" value="1"/>
</dbReference>
<dbReference type="Gene3D" id="1.10.10.410">
    <property type="match status" value="1"/>
</dbReference>
<dbReference type="Gene3D" id="1.10.150.380">
    <property type="entry name" value="GatB domain, N-terminal subdomain"/>
    <property type="match status" value="1"/>
</dbReference>
<dbReference type="HAMAP" id="MF_00121">
    <property type="entry name" value="GatB"/>
    <property type="match status" value="1"/>
</dbReference>
<dbReference type="InterPro" id="IPR017959">
    <property type="entry name" value="Asn/Gln-tRNA_amidoTrfase_suB/E"/>
</dbReference>
<dbReference type="InterPro" id="IPR006075">
    <property type="entry name" value="Asn/Gln-tRNA_Trfase_suB/E_cat"/>
</dbReference>
<dbReference type="InterPro" id="IPR018027">
    <property type="entry name" value="Asn/Gln_amidotransferase"/>
</dbReference>
<dbReference type="InterPro" id="IPR003789">
    <property type="entry name" value="Asn/Gln_tRNA_amidoTrase-B-like"/>
</dbReference>
<dbReference type="InterPro" id="IPR004413">
    <property type="entry name" value="GatB"/>
</dbReference>
<dbReference type="InterPro" id="IPR042114">
    <property type="entry name" value="GatB_C_1"/>
</dbReference>
<dbReference type="InterPro" id="IPR023168">
    <property type="entry name" value="GatB_Yqey_C_2"/>
</dbReference>
<dbReference type="InterPro" id="IPR017958">
    <property type="entry name" value="Gln-tRNA_amidoTrfase_suB_CS"/>
</dbReference>
<dbReference type="InterPro" id="IPR014746">
    <property type="entry name" value="Gln_synth/guanido_kin_cat_dom"/>
</dbReference>
<dbReference type="NCBIfam" id="TIGR00133">
    <property type="entry name" value="gatB"/>
    <property type="match status" value="1"/>
</dbReference>
<dbReference type="NCBIfam" id="NF004012">
    <property type="entry name" value="PRK05477.1-2"/>
    <property type="match status" value="1"/>
</dbReference>
<dbReference type="NCBIfam" id="NF004014">
    <property type="entry name" value="PRK05477.1-4"/>
    <property type="match status" value="1"/>
</dbReference>
<dbReference type="PANTHER" id="PTHR11659">
    <property type="entry name" value="GLUTAMYL-TRNA GLN AMIDOTRANSFERASE SUBUNIT B MITOCHONDRIAL AND PROKARYOTIC PET112-RELATED"/>
    <property type="match status" value="1"/>
</dbReference>
<dbReference type="PANTHER" id="PTHR11659:SF0">
    <property type="entry name" value="GLUTAMYL-TRNA(GLN) AMIDOTRANSFERASE SUBUNIT B, MITOCHONDRIAL"/>
    <property type="match status" value="1"/>
</dbReference>
<dbReference type="Pfam" id="PF02934">
    <property type="entry name" value="GatB_N"/>
    <property type="match status" value="1"/>
</dbReference>
<dbReference type="Pfam" id="PF02637">
    <property type="entry name" value="GatB_Yqey"/>
    <property type="match status" value="1"/>
</dbReference>
<dbReference type="SMART" id="SM00845">
    <property type="entry name" value="GatB_Yqey"/>
    <property type="match status" value="1"/>
</dbReference>
<dbReference type="SUPFAM" id="SSF89095">
    <property type="entry name" value="GatB/YqeY motif"/>
    <property type="match status" value="1"/>
</dbReference>
<dbReference type="SUPFAM" id="SSF55931">
    <property type="entry name" value="Glutamine synthetase/guanido kinase"/>
    <property type="match status" value="1"/>
</dbReference>
<dbReference type="PROSITE" id="PS01234">
    <property type="entry name" value="GATB"/>
    <property type="match status" value="1"/>
</dbReference>
<sequence length="505" mass="55901">MTAQASEARELAAVIGLEVHVQLETETKIFCGCSTDVADAEPNTHTCPVCLGLPGALPVVNEGAVEAAVKVGKAIDADIPAETTFHRKNYYYPDLPKNFQITQYDSPICQDGELEFSVESERRSVDIRRAHLEEDPGSIKHVREGSGPLESRTCSIERADYTLIDYNRAGTPLMEIVTEPDFRAPGEVRSFLEKLEEVLEYLGVFDATRDGSLRIDANLSLVDASEVGEDGDIDKSVLEDANRTEVKNISSHKGAEQALSFEASRQRKLIQSGRAVEQETRHFNETHGNTVSMRSKEEEKDYRYFREADLPPLRVSHWKDEVPIPELPDARRERFVEEYGLSEEAASKLTSTKQVADFFEDVAERFDANLAATWVADNLLGELNYRDMAITDIDDRFDEVTQLVALVAEDEITAKNAHETVLREMLDTGDDPDTVVDREGLGKTSGDEVQQAVVEAIDENPDAVEDYHSGEGGAINFLVGQVMEKTGGSADPGDVNGLLREELES</sequence>
<protein>
    <recommendedName>
        <fullName evidence="1">Aspartyl/glutamyl-tRNA(Asn/Gln) amidotransferase subunit B</fullName>
        <shortName evidence="1">Asp/Glu-ADT subunit B</shortName>
        <ecNumber evidence="1">6.3.5.-</ecNumber>
    </recommendedName>
</protein>
<comment type="function">
    <text evidence="1">Allows the formation of correctly charged Asn-tRNA(Asn) or Gln-tRNA(Gln) through the transamidation of misacylated Asp-tRNA(Asn) or Glu-tRNA(Gln) in organisms which lack either or both of asparaginyl-tRNA or glutaminyl-tRNA synthetases. The reaction takes place in the presence of glutamine and ATP through an activated phospho-Asp-tRNA(Asn) or phospho-Glu-tRNA(Gln).</text>
</comment>
<comment type="catalytic activity">
    <reaction evidence="1">
        <text>L-glutamyl-tRNA(Gln) + L-glutamine + ATP + H2O = L-glutaminyl-tRNA(Gln) + L-glutamate + ADP + phosphate + H(+)</text>
        <dbReference type="Rhea" id="RHEA:17521"/>
        <dbReference type="Rhea" id="RHEA-COMP:9681"/>
        <dbReference type="Rhea" id="RHEA-COMP:9684"/>
        <dbReference type="ChEBI" id="CHEBI:15377"/>
        <dbReference type="ChEBI" id="CHEBI:15378"/>
        <dbReference type="ChEBI" id="CHEBI:29985"/>
        <dbReference type="ChEBI" id="CHEBI:30616"/>
        <dbReference type="ChEBI" id="CHEBI:43474"/>
        <dbReference type="ChEBI" id="CHEBI:58359"/>
        <dbReference type="ChEBI" id="CHEBI:78520"/>
        <dbReference type="ChEBI" id="CHEBI:78521"/>
        <dbReference type="ChEBI" id="CHEBI:456216"/>
    </reaction>
</comment>
<comment type="catalytic activity">
    <reaction evidence="1">
        <text>L-aspartyl-tRNA(Asn) + L-glutamine + ATP + H2O = L-asparaginyl-tRNA(Asn) + L-glutamate + ADP + phosphate + 2 H(+)</text>
        <dbReference type="Rhea" id="RHEA:14513"/>
        <dbReference type="Rhea" id="RHEA-COMP:9674"/>
        <dbReference type="Rhea" id="RHEA-COMP:9677"/>
        <dbReference type="ChEBI" id="CHEBI:15377"/>
        <dbReference type="ChEBI" id="CHEBI:15378"/>
        <dbReference type="ChEBI" id="CHEBI:29985"/>
        <dbReference type="ChEBI" id="CHEBI:30616"/>
        <dbReference type="ChEBI" id="CHEBI:43474"/>
        <dbReference type="ChEBI" id="CHEBI:58359"/>
        <dbReference type="ChEBI" id="CHEBI:78515"/>
        <dbReference type="ChEBI" id="CHEBI:78516"/>
        <dbReference type="ChEBI" id="CHEBI:456216"/>
    </reaction>
</comment>
<comment type="subunit">
    <text evidence="1">Heterotrimer of A, B and C subunits.</text>
</comment>
<comment type="similarity">
    <text evidence="1">Belongs to the GatB/GatE family. GatB subfamily.</text>
</comment>
<gene>
    <name evidence="1" type="primary">gatB</name>
    <name type="ordered locus">rrnAC1642</name>
</gene>
<feature type="chain" id="PRO_0000241300" description="Aspartyl/glutamyl-tRNA(Asn/Gln) amidotransferase subunit B">
    <location>
        <begin position="1"/>
        <end position="505"/>
    </location>
</feature>
<organism>
    <name type="scientific">Haloarcula marismortui (strain ATCC 43049 / DSM 3752 / JCM 8966 / VKM B-1809)</name>
    <name type="common">Halobacterium marismortui</name>
    <dbReference type="NCBI Taxonomy" id="272569"/>
    <lineage>
        <taxon>Archaea</taxon>
        <taxon>Methanobacteriati</taxon>
        <taxon>Methanobacteriota</taxon>
        <taxon>Stenosarchaea group</taxon>
        <taxon>Halobacteria</taxon>
        <taxon>Halobacteriales</taxon>
        <taxon>Haloarculaceae</taxon>
        <taxon>Haloarcula</taxon>
    </lineage>
</organism>
<evidence type="ECO:0000255" key="1">
    <source>
        <dbReference type="HAMAP-Rule" id="MF_00121"/>
    </source>
</evidence>
<keyword id="KW-0067">ATP-binding</keyword>
<keyword id="KW-0436">Ligase</keyword>
<keyword id="KW-0547">Nucleotide-binding</keyword>
<keyword id="KW-0648">Protein biosynthesis</keyword>
<keyword id="KW-1185">Reference proteome</keyword>